<protein>
    <recommendedName>
        <fullName evidence="1">Imidazole glycerol phosphate synthase subunit HisH</fullName>
        <ecNumber evidence="1">4.3.2.10</ecNumber>
    </recommendedName>
    <alternativeName>
        <fullName evidence="1">IGP synthase glutaminase subunit</fullName>
        <ecNumber evidence="1">3.5.1.2</ecNumber>
    </alternativeName>
    <alternativeName>
        <fullName evidence="1">IGP synthase subunit HisH</fullName>
    </alternativeName>
    <alternativeName>
        <fullName evidence="1">ImGP synthase subunit HisH</fullName>
        <shortName evidence="1">IGPS subunit HisH</shortName>
    </alternativeName>
</protein>
<reference key="1">
    <citation type="journal article" date="2003" name="Proc. Natl. Acad. Sci. U.S.A.">
        <title>The complete genome sequence of Chromobacterium violaceum reveals remarkable and exploitable bacterial adaptability.</title>
        <authorList>
            <person name="Vasconcelos A.T.R."/>
            <person name="de Almeida D.F."/>
            <person name="Hungria M."/>
            <person name="Guimaraes C.T."/>
            <person name="Antonio R.V."/>
            <person name="Almeida F.C."/>
            <person name="de Almeida L.G.P."/>
            <person name="de Almeida R."/>
            <person name="Alves-Gomes J.A."/>
            <person name="Andrade E.M."/>
            <person name="Araripe J."/>
            <person name="de Araujo M.F.F."/>
            <person name="Astolfi-Filho S."/>
            <person name="Azevedo V."/>
            <person name="Baptista A.J."/>
            <person name="Bataus L.A.M."/>
            <person name="Batista J.S."/>
            <person name="Belo A."/>
            <person name="van den Berg C."/>
            <person name="Bogo M."/>
            <person name="Bonatto S."/>
            <person name="Bordignon J."/>
            <person name="Brigido M.M."/>
            <person name="Brito C.A."/>
            <person name="Brocchi M."/>
            <person name="Burity H.A."/>
            <person name="Camargo A.A."/>
            <person name="Cardoso D.D.P."/>
            <person name="Carneiro N.P."/>
            <person name="Carraro D.M."/>
            <person name="Carvalho C.M.B."/>
            <person name="Cascardo J.C.M."/>
            <person name="Cavada B.S."/>
            <person name="Chueire L.M.O."/>
            <person name="Creczynski-Pasa T.B."/>
            <person name="Cunha-Junior N.C."/>
            <person name="Fagundes N."/>
            <person name="Falcao C.L."/>
            <person name="Fantinatti F."/>
            <person name="Farias I.P."/>
            <person name="Felipe M.S.S."/>
            <person name="Ferrari L.P."/>
            <person name="Ferro J.A."/>
            <person name="Ferro M.I.T."/>
            <person name="Franco G.R."/>
            <person name="Freitas N.S.A."/>
            <person name="Furlan L.R."/>
            <person name="Gazzinelli R.T."/>
            <person name="Gomes E.A."/>
            <person name="Goncalves P.R."/>
            <person name="Grangeiro T.B."/>
            <person name="Grattapaglia D."/>
            <person name="Grisard E.C."/>
            <person name="Hanna E.S."/>
            <person name="Jardim S.N."/>
            <person name="Laurino J."/>
            <person name="Leoi L.C.T."/>
            <person name="Lima L.F.A."/>
            <person name="Loureiro M.F."/>
            <person name="Lyra M.C.C.P."/>
            <person name="Madeira H.M.F."/>
            <person name="Manfio G.P."/>
            <person name="Maranhao A.Q."/>
            <person name="Martins W.S."/>
            <person name="di Mauro S.M.Z."/>
            <person name="de Medeiros S.R.B."/>
            <person name="Meissner R.V."/>
            <person name="Moreira M.A.M."/>
            <person name="Nascimento F.F."/>
            <person name="Nicolas M.F."/>
            <person name="Oliveira J.G."/>
            <person name="Oliveira S.C."/>
            <person name="Paixao R.F.C."/>
            <person name="Parente J.A."/>
            <person name="Pedrosa F.O."/>
            <person name="Pena S.D.J."/>
            <person name="Pereira J.O."/>
            <person name="Pereira M."/>
            <person name="Pinto L.S.R.C."/>
            <person name="Pinto L.S."/>
            <person name="Porto J.I.R."/>
            <person name="Potrich D.P."/>
            <person name="Ramalho-Neto C.E."/>
            <person name="Reis A.M.M."/>
            <person name="Rigo L.U."/>
            <person name="Rondinelli E."/>
            <person name="Santos E.B.P."/>
            <person name="Santos F.R."/>
            <person name="Schneider M.P.C."/>
            <person name="Seuanez H.N."/>
            <person name="Silva A.M.R."/>
            <person name="da Silva A.L.C."/>
            <person name="Silva D.W."/>
            <person name="Silva R."/>
            <person name="Simoes I.C."/>
            <person name="Simon D."/>
            <person name="Soares C.M.A."/>
            <person name="Soares R.B.A."/>
            <person name="Souza E.M."/>
            <person name="Souza K.R.L."/>
            <person name="Souza R.C."/>
            <person name="Steffens M.B.R."/>
            <person name="Steindel M."/>
            <person name="Teixeira S.R."/>
            <person name="Urmenyi T."/>
            <person name="Vettore A."/>
            <person name="Wassem R."/>
            <person name="Zaha A."/>
            <person name="Simpson A.J.G."/>
        </authorList>
    </citation>
    <scope>NUCLEOTIDE SEQUENCE [LARGE SCALE GENOMIC DNA]</scope>
    <source>
        <strain>ATCC 12472 / DSM 30191 / JCM 1249 / CCUG 213 / NBRC 12614 / NCIMB 9131 / NCTC 9757 / MK</strain>
    </source>
</reference>
<proteinExistence type="inferred from homology"/>
<sequence length="212" mass="23359">MKVAVIDYGMGNLHSVLKSLQAVNENGADIFLTRDPEAVVKADKVVFPGQGAMPDCMRELNRHGLAEAVRETTQSKPFFGICVGAQLLFEHSEEGDTAGLGLFPGKVVRFADDQVAGGERLKVPHMGWNQVYQTRSHPLFAGIADGERFYFVHSYHFAPADAALTLAESDYPQRFACIVGRGNIFATQFHTEKSHRAGLQMMKNFLAWDGNV</sequence>
<organism>
    <name type="scientific">Chromobacterium violaceum (strain ATCC 12472 / DSM 30191 / JCM 1249 / CCUG 213 / NBRC 12614 / NCIMB 9131 / NCTC 9757 / MK)</name>
    <dbReference type="NCBI Taxonomy" id="243365"/>
    <lineage>
        <taxon>Bacteria</taxon>
        <taxon>Pseudomonadati</taxon>
        <taxon>Pseudomonadota</taxon>
        <taxon>Betaproteobacteria</taxon>
        <taxon>Neisseriales</taxon>
        <taxon>Chromobacteriaceae</taxon>
        <taxon>Chromobacterium</taxon>
    </lineage>
</organism>
<accession>Q7P0F1</accession>
<gene>
    <name evidence="1" type="primary">hisH</name>
    <name type="ordered locus">CV_0616</name>
</gene>
<keyword id="KW-0028">Amino-acid biosynthesis</keyword>
<keyword id="KW-0963">Cytoplasm</keyword>
<keyword id="KW-0315">Glutamine amidotransferase</keyword>
<keyword id="KW-0368">Histidine biosynthesis</keyword>
<keyword id="KW-0378">Hydrolase</keyword>
<keyword id="KW-0456">Lyase</keyword>
<keyword id="KW-1185">Reference proteome</keyword>
<comment type="function">
    <text evidence="1">IGPS catalyzes the conversion of PRFAR and glutamine to IGP, AICAR and glutamate. The HisH subunit catalyzes the hydrolysis of glutamine to glutamate and ammonia as part of the synthesis of IGP and AICAR. The resulting ammonia molecule is channeled to the active site of HisF.</text>
</comment>
<comment type="catalytic activity">
    <reaction evidence="1">
        <text>5-[(5-phospho-1-deoxy-D-ribulos-1-ylimino)methylamino]-1-(5-phospho-beta-D-ribosyl)imidazole-4-carboxamide + L-glutamine = D-erythro-1-(imidazol-4-yl)glycerol 3-phosphate + 5-amino-1-(5-phospho-beta-D-ribosyl)imidazole-4-carboxamide + L-glutamate + H(+)</text>
        <dbReference type="Rhea" id="RHEA:24793"/>
        <dbReference type="ChEBI" id="CHEBI:15378"/>
        <dbReference type="ChEBI" id="CHEBI:29985"/>
        <dbReference type="ChEBI" id="CHEBI:58278"/>
        <dbReference type="ChEBI" id="CHEBI:58359"/>
        <dbReference type="ChEBI" id="CHEBI:58475"/>
        <dbReference type="ChEBI" id="CHEBI:58525"/>
        <dbReference type="EC" id="4.3.2.10"/>
    </reaction>
</comment>
<comment type="catalytic activity">
    <reaction evidence="1">
        <text>L-glutamine + H2O = L-glutamate + NH4(+)</text>
        <dbReference type="Rhea" id="RHEA:15889"/>
        <dbReference type="ChEBI" id="CHEBI:15377"/>
        <dbReference type="ChEBI" id="CHEBI:28938"/>
        <dbReference type="ChEBI" id="CHEBI:29985"/>
        <dbReference type="ChEBI" id="CHEBI:58359"/>
        <dbReference type="EC" id="3.5.1.2"/>
    </reaction>
</comment>
<comment type="pathway">
    <text evidence="1">Amino-acid biosynthesis; L-histidine biosynthesis; L-histidine from 5-phospho-alpha-D-ribose 1-diphosphate: step 5/9.</text>
</comment>
<comment type="subunit">
    <text evidence="1">Heterodimer of HisH and HisF.</text>
</comment>
<comment type="subcellular location">
    <subcellularLocation>
        <location evidence="1">Cytoplasm</location>
    </subcellularLocation>
</comment>
<name>HIS5_CHRVO</name>
<evidence type="ECO:0000255" key="1">
    <source>
        <dbReference type="HAMAP-Rule" id="MF_00278"/>
    </source>
</evidence>
<dbReference type="EC" id="4.3.2.10" evidence="1"/>
<dbReference type="EC" id="3.5.1.2" evidence="1"/>
<dbReference type="EMBL" id="AE016825">
    <property type="protein sequence ID" value="AAQ58292.1"/>
    <property type="molecule type" value="Genomic_DNA"/>
</dbReference>
<dbReference type="RefSeq" id="WP_011134171.1">
    <property type="nucleotide sequence ID" value="NC_005085.1"/>
</dbReference>
<dbReference type="SMR" id="Q7P0F1"/>
<dbReference type="STRING" id="243365.CV_0616"/>
<dbReference type="KEGG" id="cvi:CV_0616"/>
<dbReference type="eggNOG" id="COG0118">
    <property type="taxonomic scope" value="Bacteria"/>
</dbReference>
<dbReference type="HOGENOM" id="CLU_071837_2_0_4"/>
<dbReference type="OrthoDB" id="9807137at2"/>
<dbReference type="UniPathway" id="UPA00031">
    <property type="reaction ID" value="UER00010"/>
</dbReference>
<dbReference type="Proteomes" id="UP000001424">
    <property type="component" value="Chromosome"/>
</dbReference>
<dbReference type="GO" id="GO:0005737">
    <property type="term" value="C:cytoplasm"/>
    <property type="evidence" value="ECO:0007669"/>
    <property type="project" value="UniProtKB-SubCell"/>
</dbReference>
<dbReference type="GO" id="GO:0004359">
    <property type="term" value="F:glutaminase activity"/>
    <property type="evidence" value="ECO:0007669"/>
    <property type="project" value="UniProtKB-EC"/>
</dbReference>
<dbReference type="GO" id="GO:0000107">
    <property type="term" value="F:imidazoleglycerol-phosphate synthase activity"/>
    <property type="evidence" value="ECO:0007669"/>
    <property type="project" value="UniProtKB-UniRule"/>
</dbReference>
<dbReference type="GO" id="GO:0016829">
    <property type="term" value="F:lyase activity"/>
    <property type="evidence" value="ECO:0007669"/>
    <property type="project" value="UniProtKB-KW"/>
</dbReference>
<dbReference type="GO" id="GO:0000105">
    <property type="term" value="P:L-histidine biosynthetic process"/>
    <property type="evidence" value="ECO:0007669"/>
    <property type="project" value="UniProtKB-UniRule"/>
</dbReference>
<dbReference type="CDD" id="cd01748">
    <property type="entry name" value="GATase1_IGP_Synthase"/>
    <property type="match status" value="1"/>
</dbReference>
<dbReference type="Gene3D" id="3.40.50.880">
    <property type="match status" value="1"/>
</dbReference>
<dbReference type="HAMAP" id="MF_00278">
    <property type="entry name" value="HisH"/>
    <property type="match status" value="1"/>
</dbReference>
<dbReference type="InterPro" id="IPR029062">
    <property type="entry name" value="Class_I_gatase-like"/>
</dbReference>
<dbReference type="InterPro" id="IPR017926">
    <property type="entry name" value="GATASE"/>
</dbReference>
<dbReference type="InterPro" id="IPR010139">
    <property type="entry name" value="Imidazole-glycPsynth_HisH"/>
</dbReference>
<dbReference type="NCBIfam" id="TIGR01855">
    <property type="entry name" value="IMP_synth_hisH"/>
    <property type="match status" value="1"/>
</dbReference>
<dbReference type="PANTHER" id="PTHR42701">
    <property type="entry name" value="IMIDAZOLE GLYCEROL PHOSPHATE SYNTHASE SUBUNIT HISH"/>
    <property type="match status" value="1"/>
</dbReference>
<dbReference type="PANTHER" id="PTHR42701:SF2">
    <property type="entry name" value="IMIDAZOLE GLYCEROL PHOSPHATE SYNTHASE SUBUNIT HISH 1"/>
    <property type="match status" value="1"/>
</dbReference>
<dbReference type="Pfam" id="PF00117">
    <property type="entry name" value="GATase"/>
    <property type="match status" value="1"/>
</dbReference>
<dbReference type="PIRSF" id="PIRSF000495">
    <property type="entry name" value="Amidotransf_hisH"/>
    <property type="match status" value="1"/>
</dbReference>
<dbReference type="SUPFAM" id="SSF52317">
    <property type="entry name" value="Class I glutamine amidotransferase-like"/>
    <property type="match status" value="1"/>
</dbReference>
<dbReference type="PROSITE" id="PS51273">
    <property type="entry name" value="GATASE_TYPE_1"/>
    <property type="match status" value="1"/>
</dbReference>
<feature type="chain" id="PRO_0000152366" description="Imidazole glycerol phosphate synthase subunit HisH">
    <location>
        <begin position="1"/>
        <end position="212"/>
    </location>
</feature>
<feature type="domain" description="Glutamine amidotransferase type-1" evidence="1">
    <location>
        <begin position="2"/>
        <end position="212"/>
    </location>
</feature>
<feature type="active site" description="Nucleophile" evidence="1">
    <location>
        <position position="82"/>
    </location>
</feature>
<feature type="active site" evidence="1">
    <location>
        <position position="190"/>
    </location>
</feature>
<feature type="active site" evidence="1">
    <location>
        <position position="192"/>
    </location>
</feature>